<name>CH60_KLEPN</name>
<reference key="1">
    <citation type="submission" date="1996-12" db="EMBL/GenBank/DDBJ databases">
        <authorList>
            <person name="Cancino-Diaz M.E."/>
            <person name="Curiel-Quezada E."/>
            <person name="Cancino-Diaz J.C."/>
            <person name="Dominguez-Lopez M.L."/>
            <person name="Garcia-Latorre E."/>
        </authorList>
    </citation>
    <scope>NUCLEOTIDE SEQUENCE [GENOMIC DNA]</scope>
</reference>
<reference key="2">
    <citation type="journal article" date="1997" name="J. Gen. Appl. Microbiol.">
        <title>Phylogenetical relationship based on groE genes among phenotypically related Enterobacter, Pantoea, Klebsiella, Serratia, and Erwinia species.</title>
        <authorList>
            <person name="Harada H."/>
            <person name="Ishikawa H."/>
        </authorList>
    </citation>
    <scope>NUCLEOTIDE SEQUENCE [GENOMIC DNA] OF 1-539</scope>
    <source>
        <strain>ATCC 13883 / DSM 30104 / JCM 1662 / NBRC 14940 / NCIMB 13281 / NCTC 9633</strain>
    </source>
</reference>
<proteinExistence type="inferred from homology"/>
<gene>
    <name evidence="1" type="primary">groEL</name>
    <name evidence="1" type="synonym">groL</name>
    <name type="synonym">mopA</name>
</gene>
<organism>
    <name type="scientific">Klebsiella pneumoniae</name>
    <dbReference type="NCBI Taxonomy" id="573"/>
    <lineage>
        <taxon>Bacteria</taxon>
        <taxon>Pseudomonadati</taxon>
        <taxon>Pseudomonadota</taxon>
        <taxon>Gammaproteobacteria</taxon>
        <taxon>Enterobacterales</taxon>
        <taxon>Enterobacteriaceae</taxon>
        <taxon>Klebsiella/Raoultella group</taxon>
        <taxon>Klebsiella</taxon>
        <taxon>Klebsiella pneumoniae complex</taxon>
    </lineage>
</organism>
<evidence type="ECO:0000255" key="1">
    <source>
        <dbReference type="HAMAP-Rule" id="MF_00600"/>
    </source>
</evidence>
<evidence type="ECO:0000305" key="2"/>
<dbReference type="EC" id="5.6.1.7" evidence="1"/>
<dbReference type="EMBL" id="U81143">
    <property type="protein sequence ID" value="AAC08714.1"/>
    <property type="molecule type" value="Genomic_DNA"/>
</dbReference>
<dbReference type="EMBL" id="AB008146">
    <property type="protein sequence ID" value="BAA25225.1"/>
    <property type="molecule type" value="Genomic_DNA"/>
</dbReference>
<dbReference type="SMR" id="O66026"/>
<dbReference type="GO" id="GO:0005737">
    <property type="term" value="C:cytoplasm"/>
    <property type="evidence" value="ECO:0007669"/>
    <property type="project" value="UniProtKB-SubCell"/>
</dbReference>
<dbReference type="GO" id="GO:0005524">
    <property type="term" value="F:ATP binding"/>
    <property type="evidence" value="ECO:0007669"/>
    <property type="project" value="UniProtKB-UniRule"/>
</dbReference>
<dbReference type="GO" id="GO:0140662">
    <property type="term" value="F:ATP-dependent protein folding chaperone"/>
    <property type="evidence" value="ECO:0007669"/>
    <property type="project" value="InterPro"/>
</dbReference>
<dbReference type="GO" id="GO:0016853">
    <property type="term" value="F:isomerase activity"/>
    <property type="evidence" value="ECO:0007669"/>
    <property type="project" value="UniProtKB-KW"/>
</dbReference>
<dbReference type="GO" id="GO:0051082">
    <property type="term" value="F:unfolded protein binding"/>
    <property type="evidence" value="ECO:0007669"/>
    <property type="project" value="UniProtKB-UniRule"/>
</dbReference>
<dbReference type="GO" id="GO:0042026">
    <property type="term" value="P:protein refolding"/>
    <property type="evidence" value="ECO:0007669"/>
    <property type="project" value="UniProtKB-UniRule"/>
</dbReference>
<dbReference type="CDD" id="cd03344">
    <property type="entry name" value="GroEL"/>
    <property type="match status" value="1"/>
</dbReference>
<dbReference type="FunFam" id="1.10.560.10:FF:000001">
    <property type="entry name" value="60 kDa chaperonin"/>
    <property type="match status" value="1"/>
</dbReference>
<dbReference type="FunFam" id="3.50.7.10:FF:000001">
    <property type="entry name" value="60 kDa chaperonin"/>
    <property type="match status" value="1"/>
</dbReference>
<dbReference type="Gene3D" id="3.50.7.10">
    <property type="entry name" value="GroEL"/>
    <property type="match status" value="1"/>
</dbReference>
<dbReference type="Gene3D" id="1.10.560.10">
    <property type="entry name" value="GroEL-like equatorial domain"/>
    <property type="match status" value="1"/>
</dbReference>
<dbReference type="Gene3D" id="3.30.260.10">
    <property type="entry name" value="TCP-1-like chaperonin intermediate domain"/>
    <property type="match status" value="1"/>
</dbReference>
<dbReference type="HAMAP" id="MF_00600">
    <property type="entry name" value="CH60"/>
    <property type="match status" value="1"/>
</dbReference>
<dbReference type="InterPro" id="IPR018370">
    <property type="entry name" value="Chaperonin_Cpn60_CS"/>
</dbReference>
<dbReference type="InterPro" id="IPR001844">
    <property type="entry name" value="Cpn60/GroEL"/>
</dbReference>
<dbReference type="InterPro" id="IPR002423">
    <property type="entry name" value="Cpn60/GroEL/TCP-1"/>
</dbReference>
<dbReference type="InterPro" id="IPR027409">
    <property type="entry name" value="GroEL-like_apical_dom_sf"/>
</dbReference>
<dbReference type="InterPro" id="IPR027413">
    <property type="entry name" value="GROEL-like_equatorial_sf"/>
</dbReference>
<dbReference type="InterPro" id="IPR027410">
    <property type="entry name" value="TCP-1-like_intermed_sf"/>
</dbReference>
<dbReference type="NCBIfam" id="TIGR02348">
    <property type="entry name" value="GroEL"/>
    <property type="match status" value="1"/>
</dbReference>
<dbReference type="NCBIfam" id="NF000592">
    <property type="entry name" value="PRK00013.1"/>
    <property type="match status" value="1"/>
</dbReference>
<dbReference type="NCBIfam" id="NF009487">
    <property type="entry name" value="PRK12849.1"/>
    <property type="match status" value="1"/>
</dbReference>
<dbReference type="NCBIfam" id="NF009488">
    <property type="entry name" value="PRK12850.1"/>
    <property type="match status" value="1"/>
</dbReference>
<dbReference type="NCBIfam" id="NF009489">
    <property type="entry name" value="PRK12851.1"/>
    <property type="match status" value="1"/>
</dbReference>
<dbReference type="PANTHER" id="PTHR45633">
    <property type="entry name" value="60 KDA HEAT SHOCK PROTEIN, MITOCHONDRIAL"/>
    <property type="match status" value="1"/>
</dbReference>
<dbReference type="Pfam" id="PF00118">
    <property type="entry name" value="Cpn60_TCP1"/>
    <property type="match status" value="1"/>
</dbReference>
<dbReference type="PRINTS" id="PR00298">
    <property type="entry name" value="CHAPERONIN60"/>
</dbReference>
<dbReference type="SUPFAM" id="SSF52029">
    <property type="entry name" value="GroEL apical domain-like"/>
    <property type="match status" value="1"/>
</dbReference>
<dbReference type="SUPFAM" id="SSF48592">
    <property type="entry name" value="GroEL equatorial domain-like"/>
    <property type="match status" value="1"/>
</dbReference>
<dbReference type="SUPFAM" id="SSF54849">
    <property type="entry name" value="GroEL-intermediate domain like"/>
    <property type="match status" value="1"/>
</dbReference>
<dbReference type="PROSITE" id="PS00296">
    <property type="entry name" value="CHAPERONINS_CPN60"/>
    <property type="match status" value="1"/>
</dbReference>
<comment type="function">
    <text evidence="1">Together with its co-chaperonin GroES, plays an essential role in assisting protein folding. The GroEL-GroES system forms a nano-cage that allows encapsulation of the non-native substrate proteins and provides a physical environment optimized to promote and accelerate protein folding.</text>
</comment>
<comment type="catalytic activity">
    <reaction evidence="1">
        <text>ATP + H2O + a folded polypeptide = ADP + phosphate + an unfolded polypeptide.</text>
        <dbReference type="EC" id="5.6.1.7"/>
    </reaction>
</comment>
<comment type="subunit">
    <text evidence="1">Forms a cylinder of 14 subunits composed of two heptameric rings stacked back-to-back. Interacts with the co-chaperonin GroES.</text>
</comment>
<comment type="subcellular location">
    <subcellularLocation>
        <location evidence="1">Cytoplasm</location>
    </subcellularLocation>
</comment>
<comment type="similarity">
    <text evidence="1">Belongs to the chaperonin (HSP60) family.</text>
</comment>
<sequence>MAAKDVKFGNDARVKMLRGVNVLADAVKVTLGPKGRNVVLDKSFGAPTITKDGVSVAREIELEDKFENMGAQMVKEVASKANDAAGDGTTTATVLAQAIVNEGLKAVAAGMNPMDLKRGIDKAVLAAVEELKALSVPCSDSKAIAQVGTISANSDETVGKLIAEVDKVGKEGVITVEDGTGLEDELDVVEGMQFDRGYLSPYFINKPDTGAVELESPFILLADKKISNIREMLPVLEAVAKAGKPLVIIAEDVEGEALATLVVNTMRGIVKVAAVKAPGFGDRRKAMLQDIATLTGGTVISEEIGMELEKATLEDLGQAKRVVINKDTTTIIDGVGEESAIQGRVAQIRKQIEEATSDYDREKLQERVAKVAGGVAVIKVGAATEVEMKEKKARVDDALHATRAAVEEGVVAGGGVALVRVAAKLAGLTGQNEDQNVGIKVALRAMEAPLRQIVSNAGEEPSVVANNVKAGDGNYGYNAATEEYGNMIDFGILDPTKVTRSALQYAASVAGLMITTECMVTDLPKSDAPDLGAAGGMGGMGGMGGMM</sequence>
<feature type="chain" id="PRO_0000063396" description="Chaperonin GroEL">
    <location>
        <begin position="1"/>
        <end position="547"/>
    </location>
</feature>
<feature type="binding site" evidence="1">
    <location>
        <begin position="30"/>
        <end position="33"/>
    </location>
    <ligand>
        <name>ATP</name>
        <dbReference type="ChEBI" id="CHEBI:30616"/>
    </ligand>
</feature>
<feature type="binding site" evidence="1">
    <location>
        <position position="51"/>
    </location>
    <ligand>
        <name>ATP</name>
        <dbReference type="ChEBI" id="CHEBI:30616"/>
    </ligand>
</feature>
<feature type="binding site" evidence="1">
    <location>
        <begin position="87"/>
        <end position="91"/>
    </location>
    <ligand>
        <name>ATP</name>
        <dbReference type="ChEBI" id="CHEBI:30616"/>
    </ligand>
</feature>
<feature type="binding site" evidence="1">
    <location>
        <position position="414"/>
    </location>
    <ligand>
        <name>ATP</name>
        <dbReference type="ChEBI" id="CHEBI:30616"/>
    </ligand>
</feature>
<feature type="binding site" evidence="1">
    <location>
        <begin position="478"/>
        <end position="480"/>
    </location>
    <ligand>
        <name>ATP</name>
        <dbReference type="ChEBI" id="CHEBI:30616"/>
    </ligand>
</feature>
<feature type="binding site" evidence="1">
    <location>
        <position position="494"/>
    </location>
    <ligand>
        <name>ATP</name>
        <dbReference type="ChEBI" id="CHEBI:30616"/>
    </ligand>
</feature>
<feature type="sequence conflict" description="In Ref. 2; BAA25225." evidence="2" ref="2">
    <original>V</original>
    <variation>AM</variation>
    <location>
        <position position="165"/>
    </location>
</feature>
<feature type="sequence conflict" description="In Ref. 2; BAA25225." evidence="2" ref="2">
    <original>V</original>
    <variation>L</variation>
    <location>
        <position position="247"/>
    </location>
</feature>
<feature type="sequence conflict" description="In Ref. 2; BAA25225." evidence="2" ref="2">
    <original>V</original>
    <variation>L</variation>
    <location>
        <position position="371"/>
    </location>
</feature>
<feature type="sequence conflict" description="In Ref. 2; BAA25225." evidence="2" ref="2">
    <original>S</original>
    <variation>G</variation>
    <location>
        <position position="526"/>
    </location>
</feature>
<protein>
    <recommendedName>
        <fullName evidence="1">Chaperonin GroEL</fullName>
        <ecNumber evidence="1">5.6.1.7</ecNumber>
    </recommendedName>
    <alternativeName>
        <fullName evidence="1">60 kDa chaperonin</fullName>
    </alternativeName>
    <alternativeName>
        <fullName evidence="1">Chaperonin-60</fullName>
        <shortName evidence="1">Cpn60</shortName>
    </alternativeName>
</protein>
<accession>O66026</accession>
<accession>O66208</accession>
<keyword id="KW-0067">ATP-binding</keyword>
<keyword id="KW-0143">Chaperone</keyword>
<keyword id="KW-0963">Cytoplasm</keyword>
<keyword id="KW-0413">Isomerase</keyword>
<keyword id="KW-0547">Nucleotide-binding</keyword>
<keyword id="KW-0346">Stress response</keyword>